<name>RECR_CHRVO</name>
<evidence type="ECO:0000255" key="1">
    <source>
        <dbReference type="HAMAP-Rule" id="MF_00017"/>
    </source>
</evidence>
<sequence>MKNPPALEQLISALKVLPGVGPKTAQRMAFHLLQRDKQGADKLARALDRALTQLTHCQRCNTFSEAELCAICADETRRRDQLCIVEMPADLMMLEQAKCFDGLYFVLMGRISPLDNIGPKDLHLDKLLARALDGQVSEIVIATNFTAEGEVTSHMLSELFKERGLTVTRIARGMPVGGELEYVDLGTLAQAVYERRGV</sequence>
<feature type="chain" id="PRO_0000190307" description="Recombination protein RecR">
    <location>
        <begin position="1"/>
        <end position="198"/>
    </location>
</feature>
<feature type="domain" description="Toprim" evidence="1">
    <location>
        <begin position="80"/>
        <end position="175"/>
    </location>
</feature>
<feature type="zinc finger region" description="C4-type" evidence="1">
    <location>
        <begin position="57"/>
        <end position="72"/>
    </location>
</feature>
<gene>
    <name evidence="1" type="primary">recR</name>
    <name type="ordered locus">CV_1612</name>
</gene>
<accession>Q7NXL4</accession>
<keyword id="KW-0227">DNA damage</keyword>
<keyword id="KW-0233">DNA recombination</keyword>
<keyword id="KW-0234">DNA repair</keyword>
<keyword id="KW-0479">Metal-binding</keyword>
<keyword id="KW-1185">Reference proteome</keyword>
<keyword id="KW-0862">Zinc</keyword>
<keyword id="KW-0863">Zinc-finger</keyword>
<protein>
    <recommendedName>
        <fullName evidence="1">Recombination protein RecR</fullName>
    </recommendedName>
</protein>
<dbReference type="EMBL" id="AE016825">
    <property type="protein sequence ID" value="AAQ59288.1"/>
    <property type="molecule type" value="Genomic_DNA"/>
</dbReference>
<dbReference type="RefSeq" id="WP_011135164.1">
    <property type="nucleotide sequence ID" value="NC_005085.1"/>
</dbReference>
<dbReference type="SMR" id="Q7NXL4"/>
<dbReference type="STRING" id="243365.CV_1612"/>
<dbReference type="KEGG" id="cvi:CV_1612"/>
<dbReference type="eggNOG" id="COG0353">
    <property type="taxonomic scope" value="Bacteria"/>
</dbReference>
<dbReference type="HOGENOM" id="CLU_060739_1_2_4"/>
<dbReference type="OrthoDB" id="9802672at2"/>
<dbReference type="Proteomes" id="UP000001424">
    <property type="component" value="Chromosome"/>
</dbReference>
<dbReference type="GO" id="GO:0003677">
    <property type="term" value="F:DNA binding"/>
    <property type="evidence" value="ECO:0007669"/>
    <property type="project" value="UniProtKB-UniRule"/>
</dbReference>
<dbReference type="GO" id="GO:0008270">
    <property type="term" value="F:zinc ion binding"/>
    <property type="evidence" value="ECO:0007669"/>
    <property type="project" value="UniProtKB-KW"/>
</dbReference>
<dbReference type="GO" id="GO:0006310">
    <property type="term" value="P:DNA recombination"/>
    <property type="evidence" value="ECO:0007669"/>
    <property type="project" value="UniProtKB-UniRule"/>
</dbReference>
<dbReference type="GO" id="GO:0006281">
    <property type="term" value="P:DNA repair"/>
    <property type="evidence" value="ECO:0007669"/>
    <property type="project" value="UniProtKB-UniRule"/>
</dbReference>
<dbReference type="CDD" id="cd01025">
    <property type="entry name" value="TOPRIM_recR"/>
    <property type="match status" value="1"/>
</dbReference>
<dbReference type="Gene3D" id="3.40.1360.10">
    <property type="match status" value="1"/>
</dbReference>
<dbReference type="Gene3D" id="6.10.250.240">
    <property type="match status" value="1"/>
</dbReference>
<dbReference type="Gene3D" id="1.10.8.420">
    <property type="entry name" value="RecR Domain 1"/>
    <property type="match status" value="1"/>
</dbReference>
<dbReference type="HAMAP" id="MF_00017">
    <property type="entry name" value="RecR"/>
    <property type="match status" value="1"/>
</dbReference>
<dbReference type="InterPro" id="IPR000093">
    <property type="entry name" value="DNA_Rcmb_RecR"/>
</dbReference>
<dbReference type="InterPro" id="IPR023627">
    <property type="entry name" value="Rcmb_RecR"/>
</dbReference>
<dbReference type="InterPro" id="IPR015967">
    <property type="entry name" value="Rcmb_RecR_Znf"/>
</dbReference>
<dbReference type="InterPro" id="IPR006171">
    <property type="entry name" value="TOPRIM_dom"/>
</dbReference>
<dbReference type="InterPro" id="IPR034137">
    <property type="entry name" value="TOPRIM_RecR"/>
</dbReference>
<dbReference type="NCBIfam" id="TIGR00615">
    <property type="entry name" value="recR"/>
    <property type="match status" value="1"/>
</dbReference>
<dbReference type="PANTHER" id="PTHR30446">
    <property type="entry name" value="RECOMBINATION PROTEIN RECR"/>
    <property type="match status" value="1"/>
</dbReference>
<dbReference type="PANTHER" id="PTHR30446:SF0">
    <property type="entry name" value="RECOMBINATION PROTEIN RECR"/>
    <property type="match status" value="1"/>
</dbReference>
<dbReference type="Pfam" id="PF21175">
    <property type="entry name" value="RecR_C"/>
    <property type="match status" value="1"/>
</dbReference>
<dbReference type="Pfam" id="PF21176">
    <property type="entry name" value="RecR_HhH"/>
    <property type="match status" value="1"/>
</dbReference>
<dbReference type="Pfam" id="PF02132">
    <property type="entry name" value="RecR_ZnF"/>
    <property type="match status" value="1"/>
</dbReference>
<dbReference type="Pfam" id="PF13662">
    <property type="entry name" value="Toprim_4"/>
    <property type="match status" value="1"/>
</dbReference>
<dbReference type="SMART" id="SM00493">
    <property type="entry name" value="TOPRIM"/>
    <property type="match status" value="1"/>
</dbReference>
<dbReference type="SUPFAM" id="SSF111304">
    <property type="entry name" value="Recombination protein RecR"/>
    <property type="match status" value="1"/>
</dbReference>
<dbReference type="PROSITE" id="PS50880">
    <property type="entry name" value="TOPRIM"/>
    <property type="match status" value="1"/>
</dbReference>
<organism>
    <name type="scientific">Chromobacterium violaceum (strain ATCC 12472 / DSM 30191 / JCM 1249 / CCUG 213 / NBRC 12614 / NCIMB 9131 / NCTC 9757 / MK)</name>
    <dbReference type="NCBI Taxonomy" id="243365"/>
    <lineage>
        <taxon>Bacteria</taxon>
        <taxon>Pseudomonadati</taxon>
        <taxon>Pseudomonadota</taxon>
        <taxon>Betaproteobacteria</taxon>
        <taxon>Neisseriales</taxon>
        <taxon>Chromobacteriaceae</taxon>
        <taxon>Chromobacterium</taxon>
    </lineage>
</organism>
<proteinExistence type="inferred from homology"/>
<reference key="1">
    <citation type="journal article" date="2003" name="Proc. Natl. Acad. Sci. U.S.A.">
        <title>The complete genome sequence of Chromobacterium violaceum reveals remarkable and exploitable bacterial adaptability.</title>
        <authorList>
            <person name="Vasconcelos A.T.R."/>
            <person name="de Almeida D.F."/>
            <person name="Hungria M."/>
            <person name="Guimaraes C.T."/>
            <person name="Antonio R.V."/>
            <person name="Almeida F.C."/>
            <person name="de Almeida L.G.P."/>
            <person name="de Almeida R."/>
            <person name="Alves-Gomes J.A."/>
            <person name="Andrade E.M."/>
            <person name="Araripe J."/>
            <person name="de Araujo M.F.F."/>
            <person name="Astolfi-Filho S."/>
            <person name="Azevedo V."/>
            <person name="Baptista A.J."/>
            <person name="Bataus L.A.M."/>
            <person name="Batista J.S."/>
            <person name="Belo A."/>
            <person name="van den Berg C."/>
            <person name="Bogo M."/>
            <person name="Bonatto S."/>
            <person name="Bordignon J."/>
            <person name="Brigido M.M."/>
            <person name="Brito C.A."/>
            <person name="Brocchi M."/>
            <person name="Burity H.A."/>
            <person name="Camargo A.A."/>
            <person name="Cardoso D.D.P."/>
            <person name="Carneiro N.P."/>
            <person name="Carraro D.M."/>
            <person name="Carvalho C.M.B."/>
            <person name="Cascardo J.C.M."/>
            <person name="Cavada B.S."/>
            <person name="Chueire L.M.O."/>
            <person name="Creczynski-Pasa T.B."/>
            <person name="Cunha-Junior N.C."/>
            <person name="Fagundes N."/>
            <person name="Falcao C.L."/>
            <person name="Fantinatti F."/>
            <person name="Farias I.P."/>
            <person name="Felipe M.S.S."/>
            <person name="Ferrari L.P."/>
            <person name="Ferro J.A."/>
            <person name="Ferro M.I.T."/>
            <person name="Franco G.R."/>
            <person name="Freitas N.S.A."/>
            <person name="Furlan L.R."/>
            <person name="Gazzinelli R.T."/>
            <person name="Gomes E.A."/>
            <person name="Goncalves P.R."/>
            <person name="Grangeiro T.B."/>
            <person name="Grattapaglia D."/>
            <person name="Grisard E.C."/>
            <person name="Hanna E.S."/>
            <person name="Jardim S.N."/>
            <person name="Laurino J."/>
            <person name="Leoi L.C.T."/>
            <person name="Lima L.F.A."/>
            <person name="Loureiro M.F."/>
            <person name="Lyra M.C.C.P."/>
            <person name="Madeira H.M.F."/>
            <person name="Manfio G.P."/>
            <person name="Maranhao A.Q."/>
            <person name="Martins W.S."/>
            <person name="di Mauro S.M.Z."/>
            <person name="de Medeiros S.R.B."/>
            <person name="Meissner R.V."/>
            <person name="Moreira M.A.M."/>
            <person name="Nascimento F.F."/>
            <person name="Nicolas M.F."/>
            <person name="Oliveira J.G."/>
            <person name="Oliveira S.C."/>
            <person name="Paixao R.F.C."/>
            <person name="Parente J.A."/>
            <person name="Pedrosa F.O."/>
            <person name="Pena S.D.J."/>
            <person name="Pereira J.O."/>
            <person name="Pereira M."/>
            <person name="Pinto L.S.R.C."/>
            <person name="Pinto L.S."/>
            <person name="Porto J.I.R."/>
            <person name="Potrich D.P."/>
            <person name="Ramalho-Neto C.E."/>
            <person name="Reis A.M.M."/>
            <person name="Rigo L.U."/>
            <person name="Rondinelli E."/>
            <person name="Santos E.B.P."/>
            <person name="Santos F.R."/>
            <person name="Schneider M.P.C."/>
            <person name="Seuanez H.N."/>
            <person name="Silva A.M.R."/>
            <person name="da Silva A.L.C."/>
            <person name="Silva D.W."/>
            <person name="Silva R."/>
            <person name="Simoes I.C."/>
            <person name="Simon D."/>
            <person name="Soares C.M.A."/>
            <person name="Soares R.B.A."/>
            <person name="Souza E.M."/>
            <person name="Souza K.R.L."/>
            <person name="Souza R.C."/>
            <person name="Steffens M.B.R."/>
            <person name="Steindel M."/>
            <person name="Teixeira S.R."/>
            <person name="Urmenyi T."/>
            <person name="Vettore A."/>
            <person name="Wassem R."/>
            <person name="Zaha A."/>
            <person name="Simpson A.J.G."/>
        </authorList>
    </citation>
    <scope>NUCLEOTIDE SEQUENCE [LARGE SCALE GENOMIC DNA]</scope>
    <source>
        <strain>ATCC 12472 / DSM 30191 / JCM 1249 / CCUG 213 / NBRC 12614 / NCIMB 9131 / NCTC 9757 / MK</strain>
    </source>
</reference>
<comment type="function">
    <text evidence="1">May play a role in DNA repair. It seems to be involved in an RecBC-independent recombinational process of DNA repair. It may act with RecF and RecO.</text>
</comment>
<comment type="similarity">
    <text evidence="1">Belongs to the RecR family.</text>
</comment>